<protein>
    <recommendedName>
        <fullName evidence="1">Histidinol-phosphate aminotransferase 2</fullName>
        <ecNumber evidence="1">2.6.1.9</ecNumber>
    </recommendedName>
    <alternativeName>
        <fullName evidence="1">Imidazole acetol-phosphate transaminase 2</fullName>
    </alternativeName>
</protein>
<gene>
    <name evidence="1" type="primary">hisC2</name>
    <name type="ordered locus">Psyc_1901</name>
</gene>
<feature type="chain" id="PRO_0000153427" description="Histidinol-phosphate aminotransferase 2">
    <location>
        <begin position="1"/>
        <end position="377"/>
    </location>
</feature>
<feature type="region of interest" description="Disordered" evidence="2">
    <location>
        <begin position="17"/>
        <end position="44"/>
    </location>
</feature>
<feature type="modified residue" description="N6-(pyridoxal phosphate)lysine" evidence="1">
    <location>
        <position position="228"/>
    </location>
</feature>
<reference key="1">
    <citation type="journal article" date="2010" name="Appl. Environ. Microbiol.">
        <title>The genome sequence of Psychrobacter arcticus 273-4, a psychroactive Siberian permafrost bacterium, reveals mechanisms for adaptation to low-temperature growth.</title>
        <authorList>
            <person name="Ayala-del-Rio H.L."/>
            <person name="Chain P.S."/>
            <person name="Grzymski J.J."/>
            <person name="Ponder M.A."/>
            <person name="Ivanova N."/>
            <person name="Bergholz P.W."/>
            <person name="Di Bartolo G."/>
            <person name="Hauser L."/>
            <person name="Land M."/>
            <person name="Bakermans C."/>
            <person name="Rodrigues D."/>
            <person name="Klappenbach J."/>
            <person name="Zarka D."/>
            <person name="Larimer F."/>
            <person name="Richardson P."/>
            <person name="Murray A."/>
            <person name="Thomashow M."/>
            <person name="Tiedje J.M."/>
        </authorList>
    </citation>
    <scope>NUCLEOTIDE SEQUENCE [LARGE SCALE GENOMIC DNA]</scope>
    <source>
        <strain>DSM 17307 / VKM B-2377 / 273-4</strain>
    </source>
</reference>
<evidence type="ECO:0000255" key="1">
    <source>
        <dbReference type="HAMAP-Rule" id="MF_01023"/>
    </source>
</evidence>
<evidence type="ECO:0000256" key="2">
    <source>
        <dbReference type="SAM" id="MobiDB-lite"/>
    </source>
</evidence>
<comment type="catalytic activity">
    <reaction evidence="1">
        <text>L-histidinol phosphate + 2-oxoglutarate = 3-(imidazol-4-yl)-2-oxopropyl phosphate + L-glutamate</text>
        <dbReference type="Rhea" id="RHEA:23744"/>
        <dbReference type="ChEBI" id="CHEBI:16810"/>
        <dbReference type="ChEBI" id="CHEBI:29985"/>
        <dbReference type="ChEBI" id="CHEBI:57766"/>
        <dbReference type="ChEBI" id="CHEBI:57980"/>
        <dbReference type="EC" id="2.6.1.9"/>
    </reaction>
</comment>
<comment type="cofactor">
    <cofactor evidence="1">
        <name>pyridoxal 5'-phosphate</name>
        <dbReference type="ChEBI" id="CHEBI:597326"/>
    </cofactor>
</comment>
<comment type="pathway">
    <text evidence="1">Amino-acid biosynthesis; L-histidine biosynthesis; L-histidine from 5-phospho-alpha-D-ribose 1-diphosphate: step 7/9.</text>
</comment>
<comment type="subunit">
    <text evidence="1">Homodimer.</text>
</comment>
<comment type="similarity">
    <text evidence="1">Belongs to the class-II pyridoxal-phosphate-dependent aminotransferase family. Histidinol-phosphate aminotransferase subfamily.</text>
</comment>
<organism>
    <name type="scientific">Psychrobacter arcticus (strain DSM 17307 / VKM B-2377 / 273-4)</name>
    <dbReference type="NCBI Taxonomy" id="259536"/>
    <lineage>
        <taxon>Bacteria</taxon>
        <taxon>Pseudomonadati</taxon>
        <taxon>Pseudomonadota</taxon>
        <taxon>Gammaproteobacteria</taxon>
        <taxon>Moraxellales</taxon>
        <taxon>Moraxellaceae</taxon>
        <taxon>Psychrobacter</taxon>
    </lineage>
</organism>
<keyword id="KW-0028">Amino-acid biosynthesis</keyword>
<keyword id="KW-0032">Aminotransferase</keyword>
<keyword id="KW-0368">Histidine biosynthesis</keyword>
<keyword id="KW-0663">Pyridoxal phosphate</keyword>
<keyword id="KW-1185">Reference proteome</keyword>
<keyword id="KW-0808">Transferase</keyword>
<accession>Q4FQF9</accession>
<name>HIS82_PSYA2</name>
<sequence length="377" mass="41304">MSESKIDNRLWSSKARNLSPYVPGEQPQHDDLCKLNTNENPFPPSPKVGEAITKVLAQQADDLRLYPAPESEELRGALAALYNLDINQVFVGNGSDEVLALVFASFFLKNRPVLAPDISYSFYPVYANTFGIELVQIPLEADFSISPDAYRRPCSGIIIANPNAPTGLLLSLADIRKLAGEHSDSVIVIDEAYIDFAQLEEASAESQMSAISLINEFDNLLVTQTFSKSRSLAGLRVGMAFGNASLIEALTRMKNSFNSYPLDKLAQAGATASVLDVEYFEQTCQQVIDLRTSLTAELTALGYDVLPSHANFVFARPHDGAASQVAEVLREQGIIVRHFDKPRINEYLRITIGTPSQHERLINALKALQAVADVEAS</sequence>
<dbReference type="EC" id="2.6.1.9" evidence="1"/>
<dbReference type="EMBL" id="CP000082">
    <property type="protein sequence ID" value="AAZ19749.1"/>
    <property type="molecule type" value="Genomic_DNA"/>
</dbReference>
<dbReference type="RefSeq" id="WP_011281158.1">
    <property type="nucleotide sequence ID" value="NC_007204.1"/>
</dbReference>
<dbReference type="SMR" id="Q4FQF9"/>
<dbReference type="STRING" id="259536.Psyc_1901"/>
<dbReference type="DNASU" id="3515871"/>
<dbReference type="KEGG" id="par:Psyc_1901"/>
<dbReference type="eggNOG" id="COG0079">
    <property type="taxonomic scope" value="Bacteria"/>
</dbReference>
<dbReference type="HOGENOM" id="CLU_017584_3_0_6"/>
<dbReference type="OrthoDB" id="9809616at2"/>
<dbReference type="UniPathway" id="UPA00031">
    <property type="reaction ID" value="UER00012"/>
</dbReference>
<dbReference type="Proteomes" id="UP000000546">
    <property type="component" value="Chromosome"/>
</dbReference>
<dbReference type="GO" id="GO:0004400">
    <property type="term" value="F:histidinol-phosphate transaminase activity"/>
    <property type="evidence" value="ECO:0007669"/>
    <property type="project" value="UniProtKB-UniRule"/>
</dbReference>
<dbReference type="GO" id="GO:0030170">
    <property type="term" value="F:pyridoxal phosphate binding"/>
    <property type="evidence" value="ECO:0007669"/>
    <property type="project" value="InterPro"/>
</dbReference>
<dbReference type="GO" id="GO:0000105">
    <property type="term" value="P:L-histidine biosynthetic process"/>
    <property type="evidence" value="ECO:0007669"/>
    <property type="project" value="UniProtKB-UniRule"/>
</dbReference>
<dbReference type="CDD" id="cd00609">
    <property type="entry name" value="AAT_like"/>
    <property type="match status" value="1"/>
</dbReference>
<dbReference type="Gene3D" id="3.90.1150.10">
    <property type="entry name" value="Aspartate Aminotransferase, domain 1"/>
    <property type="match status" value="1"/>
</dbReference>
<dbReference type="Gene3D" id="3.40.640.10">
    <property type="entry name" value="Type I PLP-dependent aspartate aminotransferase-like (Major domain)"/>
    <property type="match status" value="1"/>
</dbReference>
<dbReference type="HAMAP" id="MF_01023">
    <property type="entry name" value="HisC_aminotrans_2"/>
    <property type="match status" value="1"/>
</dbReference>
<dbReference type="InterPro" id="IPR001917">
    <property type="entry name" value="Aminotrans_II_pyridoxalP_BS"/>
</dbReference>
<dbReference type="InterPro" id="IPR004839">
    <property type="entry name" value="Aminotransferase_I/II_large"/>
</dbReference>
<dbReference type="InterPro" id="IPR005861">
    <property type="entry name" value="HisP_aminotrans"/>
</dbReference>
<dbReference type="InterPro" id="IPR015424">
    <property type="entry name" value="PyrdxlP-dep_Trfase"/>
</dbReference>
<dbReference type="InterPro" id="IPR015421">
    <property type="entry name" value="PyrdxlP-dep_Trfase_major"/>
</dbReference>
<dbReference type="InterPro" id="IPR015422">
    <property type="entry name" value="PyrdxlP-dep_Trfase_small"/>
</dbReference>
<dbReference type="NCBIfam" id="TIGR01141">
    <property type="entry name" value="hisC"/>
    <property type="match status" value="1"/>
</dbReference>
<dbReference type="PANTHER" id="PTHR42885:SF2">
    <property type="entry name" value="HISTIDINOL-PHOSPHATE AMINOTRANSFERASE"/>
    <property type="match status" value="1"/>
</dbReference>
<dbReference type="PANTHER" id="PTHR42885">
    <property type="entry name" value="HISTIDINOL-PHOSPHATE AMINOTRANSFERASE-RELATED"/>
    <property type="match status" value="1"/>
</dbReference>
<dbReference type="Pfam" id="PF00155">
    <property type="entry name" value="Aminotran_1_2"/>
    <property type="match status" value="1"/>
</dbReference>
<dbReference type="SUPFAM" id="SSF53383">
    <property type="entry name" value="PLP-dependent transferases"/>
    <property type="match status" value="1"/>
</dbReference>
<dbReference type="PROSITE" id="PS00599">
    <property type="entry name" value="AA_TRANSFER_CLASS_2"/>
    <property type="match status" value="1"/>
</dbReference>
<proteinExistence type="inferred from homology"/>